<keyword id="KW-0687">Ribonucleoprotein</keyword>
<keyword id="KW-0689">Ribosomal protein</keyword>
<keyword id="KW-0694">RNA-binding</keyword>
<keyword id="KW-0699">rRNA-binding</keyword>
<accession>A9KWB5</accession>
<comment type="function">
    <text evidence="1">Binds 16S rRNA, required for the assembly of 30S particles and may also be responsible for determining the conformation of the 16S rRNA at the A site.</text>
</comment>
<comment type="subunit">
    <text evidence="1">Part of the 30S ribosomal subunit. Contacts proteins S3 and S10.</text>
</comment>
<comment type="similarity">
    <text evidence="1">Belongs to the universal ribosomal protein uS14 family.</text>
</comment>
<sequence>MAKTSMKAREAKRAQLVAKYAEKRAALKTIIASPASSDEDRWDAVLKLQALPRDSSAARQRNRCNQTGRPHGFLRKFGLSRIKLREATMRGEVPGLRKASW</sequence>
<gene>
    <name evidence="1" type="primary">rpsN</name>
    <name type="ordered locus">Sbal195_0213</name>
</gene>
<reference key="1">
    <citation type="submission" date="2007-11" db="EMBL/GenBank/DDBJ databases">
        <title>Complete sequence of chromosome of Shewanella baltica OS195.</title>
        <authorList>
            <consortium name="US DOE Joint Genome Institute"/>
            <person name="Copeland A."/>
            <person name="Lucas S."/>
            <person name="Lapidus A."/>
            <person name="Barry K."/>
            <person name="Glavina del Rio T."/>
            <person name="Dalin E."/>
            <person name="Tice H."/>
            <person name="Pitluck S."/>
            <person name="Chain P."/>
            <person name="Malfatti S."/>
            <person name="Shin M."/>
            <person name="Vergez L."/>
            <person name="Schmutz J."/>
            <person name="Larimer F."/>
            <person name="Land M."/>
            <person name="Hauser L."/>
            <person name="Kyrpides N."/>
            <person name="Kim E."/>
            <person name="Brettar I."/>
            <person name="Rodrigues J."/>
            <person name="Konstantinidis K."/>
            <person name="Klappenbach J."/>
            <person name="Hofle M."/>
            <person name="Tiedje J."/>
            <person name="Richardson P."/>
        </authorList>
    </citation>
    <scope>NUCLEOTIDE SEQUENCE [LARGE SCALE GENOMIC DNA]</scope>
    <source>
        <strain>OS195</strain>
    </source>
</reference>
<name>RS14_SHEB9</name>
<dbReference type="EMBL" id="CP000891">
    <property type="protein sequence ID" value="ABX47395.1"/>
    <property type="molecule type" value="Genomic_DNA"/>
</dbReference>
<dbReference type="RefSeq" id="WP_006083587.1">
    <property type="nucleotide sequence ID" value="NC_009997.1"/>
</dbReference>
<dbReference type="SMR" id="A9KWB5"/>
<dbReference type="GeneID" id="11770570"/>
<dbReference type="KEGG" id="sbn:Sbal195_0213"/>
<dbReference type="HOGENOM" id="CLU_139869_0_1_6"/>
<dbReference type="Proteomes" id="UP000000770">
    <property type="component" value="Chromosome"/>
</dbReference>
<dbReference type="GO" id="GO:0005737">
    <property type="term" value="C:cytoplasm"/>
    <property type="evidence" value="ECO:0007669"/>
    <property type="project" value="UniProtKB-ARBA"/>
</dbReference>
<dbReference type="GO" id="GO:0015935">
    <property type="term" value="C:small ribosomal subunit"/>
    <property type="evidence" value="ECO:0007669"/>
    <property type="project" value="TreeGrafter"/>
</dbReference>
<dbReference type="GO" id="GO:0019843">
    <property type="term" value="F:rRNA binding"/>
    <property type="evidence" value="ECO:0007669"/>
    <property type="project" value="UniProtKB-UniRule"/>
</dbReference>
<dbReference type="GO" id="GO:0003735">
    <property type="term" value="F:structural constituent of ribosome"/>
    <property type="evidence" value="ECO:0007669"/>
    <property type="project" value="InterPro"/>
</dbReference>
<dbReference type="GO" id="GO:0006412">
    <property type="term" value="P:translation"/>
    <property type="evidence" value="ECO:0007669"/>
    <property type="project" value="UniProtKB-UniRule"/>
</dbReference>
<dbReference type="FunFam" id="1.10.287.1480:FF:000001">
    <property type="entry name" value="30S ribosomal protein S14"/>
    <property type="match status" value="1"/>
</dbReference>
<dbReference type="Gene3D" id="1.10.287.1480">
    <property type="match status" value="1"/>
</dbReference>
<dbReference type="HAMAP" id="MF_00537">
    <property type="entry name" value="Ribosomal_uS14_1"/>
    <property type="match status" value="1"/>
</dbReference>
<dbReference type="InterPro" id="IPR001209">
    <property type="entry name" value="Ribosomal_uS14"/>
</dbReference>
<dbReference type="InterPro" id="IPR023036">
    <property type="entry name" value="Ribosomal_uS14_bac/plastid"/>
</dbReference>
<dbReference type="InterPro" id="IPR018271">
    <property type="entry name" value="Ribosomal_uS14_CS"/>
</dbReference>
<dbReference type="NCBIfam" id="NF006477">
    <property type="entry name" value="PRK08881.1"/>
    <property type="match status" value="1"/>
</dbReference>
<dbReference type="PANTHER" id="PTHR19836">
    <property type="entry name" value="30S RIBOSOMAL PROTEIN S14"/>
    <property type="match status" value="1"/>
</dbReference>
<dbReference type="PANTHER" id="PTHR19836:SF19">
    <property type="entry name" value="SMALL RIBOSOMAL SUBUNIT PROTEIN US14M"/>
    <property type="match status" value="1"/>
</dbReference>
<dbReference type="Pfam" id="PF00253">
    <property type="entry name" value="Ribosomal_S14"/>
    <property type="match status" value="1"/>
</dbReference>
<dbReference type="SUPFAM" id="SSF57716">
    <property type="entry name" value="Glucocorticoid receptor-like (DNA-binding domain)"/>
    <property type="match status" value="1"/>
</dbReference>
<dbReference type="PROSITE" id="PS00527">
    <property type="entry name" value="RIBOSOMAL_S14"/>
    <property type="match status" value="1"/>
</dbReference>
<proteinExistence type="inferred from homology"/>
<organism>
    <name type="scientific">Shewanella baltica (strain OS195)</name>
    <dbReference type="NCBI Taxonomy" id="399599"/>
    <lineage>
        <taxon>Bacteria</taxon>
        <taxon>Pseudomonadati</taxon>
        <taxon>Pseudomonadota</taxon>
        <taxon>Gammaproteobacteria</taxon>
        <taxon>Alteromonadales</taxon>
        <taxon>Shewanellaceae</taxon>
        <taxon>Shewanella</taxon>
    </lineage>
</organism>
<evidence type="ECO:0000255" key="1">
    <source>
        <dbReference type="HAMAP-Rule" id="MF_00537"/>
    </source>
</evidence>
<evidence type="ECO:0000305" key="2"/>
<protein>
    <recommendedName>
        <fullName evidence="1">Small ribosomal subunit protein uS14</fullName>
    </recommendedName>
    <alternativeName>
        <fullName evidence="2">30S ribosomal protein S14</fullName>
    </alternativeName>
</protein>
<feature type="chain" id="PRO_1000128572" description="Small ribosomal subunit protein uS14">
    <location>
        <begin position="1"/>
        <end position="101"/>
    </location>
</feature>